<evidence type="ECO:0000255" key="1">
    <source>
        <dbReference type="HAMAP-Rule" id="MF_01820"/>
    </source>
</evidence>
<evidence type="ECO:0000255" key="2">
    <source>
        <dbReference type="PROSITE-ProRule" id="PRU01058"/>
    </source>
</evidence>
<protein>
    <recommendedName>
        <fullName evidence="1">Small ribosomal subunit biogenesis GTPase RsgA</fullName>
        <ecNumber evidence="1">3.6.1.-</ecNumber>
    </recommendedName>
</protein>
<sequence length="315" mass="34759">MTRGKPGRAHKQAATGEHGLVIAAHGRHYLVERDGGGFLQCFPRGKRSECAVGDRVVYEATAVDQGVVVRVDERRNLLYRSDQFKSKVLAANLDQVIIMLGTEPSFSEDLLGRALVAAESLGITPLILLNKIDLTARLETARSRLALYRDLGYTIVELTVHGAPEAAHAALEPHVAGRASILIGQSGMGKSSLLNLLIPGVDAQTREISEKLDSGKHTTTFTRLYHLPADWGQGGMLIDSPGFQEFGLHHLSEGMLERAFPEFRPRLTECRFYNCRHLQEPGCGILGAMAEGKIDPRRHQLYAQLLHESEQQKPW</sequence>
<comment type="function">
    <text evidence="1">One of several proteins that assist in the late maturation steps of the functional core of the 30S ribosomal subunit. Helps release RbfA from mature subunits. May play a role in the assembly of ribosomal proteins into the subunit. Circularly permuted GTPase that catalyzes slow GTP hydrolysis, GTPase activity is stimulated by the 30S ribosomal subunit.</text>
</comment>
<comment type="cofactor">
    <cofactor evidence="1">
        <name>Zn(2+)</name>
        <dbReference type="ChEBI" id="CHEBI:29105"/>
    </cofactor>
    <text evidence="1">Binds 1 zinc ion per subunit.</text>
</comment>
<comment type="subunit">
    <text evidence="1">Monomer. Associates with 30S ribosomal subunit, binds 16S rRNA.</text>
</comment>
<comment type="subcellular location">
    <subcellularLocation>
        <location evidence="1">Cytoplasm</location>
    </subcellularLocation>
</comment>
<comment type="similarity">
    <text evidence="1">Belongs to the TRAFAC class YlqF/YawG GTPase family. RsgA subfamily.</text>
</comment>
<dbReference type="EC" id="3.6.1.-" evidence="1"/>
<dbReference type="EMBL" id="CP001068">
    <property type="protein sequence ID" value="ACD25961.1"/>
    <property type="molecule type" value="Genomic_DNA"/>
</dbReference>
<dbReference type="SMR" id="B2U8L7"/>
<dbReference type="STRING" id="402626.Rpic_0811"/>
<dbReference type="KEGG" id="rpi:Rpic_0811"/>
<dbReference type="PATRIC" id="fig|402626.5.peg.2008"/>
<dbReference type="eggNOG" id="COG1162">
    <property type="taxonomic scope" value="Bacteria"/>
</dbReference>
<dbReference type="HOGENOM" id="CLU_033617_2_0_4"/>
<dbReference type="GO" id="GO:0005737">
    <property type="term" value="C:cytoplasm"/>
    <property type="evidence" value="ECO:0007669"/>
    <property type="project" value="UniProtKB-SubCell"/>
</dbReference>
<dbReference type="GO" id="GO:0005525">
    <property type="term" value="F:GTP binding"/>
    <property type="evidence" value="ECO:0007669"/>
    <property type="project" value="UniProtKB-UniRule"/>
</dbReference>
<dbReference type="GO" id="GO:0003924">
    <property type="term" value="F:GTPase activity"/>
    <property type="evidence" value="ECO:0007669"/>
    <property type="project" value="UniProtKB-UniRule"/>
</dbReference>
<dbReference type="GO" id="GO:0046872">
    <property type="term" value="F:metal ion binding"/>
    <property type="evidence" value="ECO:0007669"/>
    <property type="project" value="UniProtKB-KW"/>
</dbReference>
<dbReference type="GO" id="GO:0019843">
    <property type="term" value="F:rRNA binding"/>
    <property type="evidence" value="ECO:0007669"/>
    <property type="project" value="UniProtKB-KW"/>
</dbReference>
<dbReference type="GO" id="GO:0042274">
    <property type="term" value="P:ribosomal small subunit biogenesis"/>
    <property type="evidence" value="ECO:0007669"/>
    <property type="project" value="UniProtKB-UniRule"/>
</dbReference>
<dbReference type="CDD" id="cd04466">
    <property type="entry name" value="S1_YloQ_GTPase"/>
    <property type="match status" value="1"/>
</dbReference>
<dbReference type="CDD" id="cd01854">
    <property type="entry name" value="YjeQ_EngC"/>
    <property type="match status" value="1"/>
</dbReference>
<dbReference type="Gene3D" id="2.40.50.140">
    <property type="entry name" value="Nucleic acid-binding proteins"/>
    <property type="match status" value="1"/>
</dbReference>
<dbReference type="Gene3D" id="3.40.50.300">
    <property type="entry name" value="P-loop containing nucleotide triphosphate hydrolases"/>
    <property type="match status" value="1"/>
</dbReference>
<dbReference type="Gene3D" id="1.10.40.50">
    <property type="entry name" value="Probable gtpase engc, domain 3"/>
    <property type="match status" value="1"/>
</dbReference>
<dbReference type="HAMAP" id="MF_01820">
    <property type="entry name" value="GTPase_RsgA"/>
    <property type="match status" value="1"/>
</dbReference>
<dbReference type="InterPro" id="IPR030378">
    <property type="entry name" value="G_CP_dom"/>
</dbReference>
<dbReference type="InterPro" id="IPR012340">
    <property type="entry name" value="NA-bd_OB-fold"/>
</dbReference>
<dbReference type="InterPro" id="IPR027417">
    <property type="entry name" value="P-loop_NTPase"/>
</dbReference>
<dbReference type="InterPro" id="IPR004881">
    <property type="entry name" value="Ribosome_biogen_GTPase_RsgA"/>
</dbReference>
<dbReference type="InterPro" id="IPR010914">
    <property type="entry name" value="RsgA_GTPase_dom"/>
</dbReference>
<dbReference type="InterPro" id="IPR031944">
    <property type="entry name" value="RsgA_N"/>
</dbReference>
<dbReference type="NCBIfam" id="TIGR00157">
    <property type="entry name" value="ribosome small subunit-dependent GTPase A"/>
    <property type="match status" value="1"/>
</dbReference>
<dbReference type="PANTHER" id="PTHR32120">
    <property type="entry name" value="SMALL RIBOSOMAL SUBUNIT BIOGENESIS GTPASE RSGA"/>
    <property type="match status" value="1"/>
</dbReference>
<dbReference type="PANTHER" id="PTHR32120:SF11">
    <property type="entry name" value="SMALL RIBOSOMAL SUBUNIT BIOGENESIS GTPASE RSGA 1, MITOCHONDRIAL-RELATED"/>
    <property type="match status" value="1"/>
</dbReference>
<dbReference type="Pfam" id="PF03193">
    <property type="entry name" value="RsgA_GTPase"/>
    <property type="match status" value="1"/>
</dbReference>
<dbReference type="SUPFAM" id="SSF50249">
    <property type="entry name" value="Nucleic acid-binding proteins"/>
    <property type="match status" value="1"/>
</dbReference>
<dbReference type="SUPFAM" id="SSF52540">
    <property type="entry name" value="P-loop containing nucleoside triphosphate hydrolases"/>
    <property type="match status" value="1"/>
</dbReference>
<dbReference type="PROSITE" id="PS50936">
    <property type="entry name" value="ENGC_GTPASE"/>
    <property type="match status" value="1"/>
</dbReference>
<dbReference type="PROSITE" id="PS51721">
    <property type="entry name" value="G_CP"/>
    <property type="match status" value="1"/>
</dbReference>
<keyword id="KW-0963">Cytoplasm</keyword>
<keyword id="KW-0342">GTP-binding</keyword>
<keyword id="KW-0378">Hydrolase</keyword>
<keyword id="KW-0479">Metal-binding</keyword>
<keyword id="KW-0547">Nucleotide-binding</keyword>
<keyword id="KW-0690">Ribosome biogenesis</keyword>
<keyword id="KW-0694">RNA-binding</keyword>
<keyword id="KW-0699">rRNA-binding</keyword>
<keyword id="KW-0862">Zinc</keyword>
<gene>
    <name evidence="1" type="primary">rsgA</name>
    <name type="ordered locus">Rpic_0811</name>
</gene>
<feature type="chain" id="PRO_1000188130" description="Small ribosomal subunit biogenesis GTPase RsgA">
    <location>
        <begin position="1"/>
        <end position="315"/>
    </location>
</feature>
<feature type="domain" description="CP-type G" evidence="2">
    <location>
        <begin position="82"/>
        <end position="246"/>
    </location>
</feature>
<feature type="binding site" evidence="1">
    <location>
        <begin position="130"/>
        <end position="133"/>
    </location>
    <ligand>
        <name>GTP</name>
        <dbReference type="ChEBI" id="CHEBI:37565"/>
    </ligand>
</feature>
<feature type="binding site" evidence="1">
    <location>
        <begin position="184"/>
        <end position="192"/>
    </location>
    <ligand>
        <name>GTP</name>
        <dbReference type="ChEBI" id="CHEBI:37565"/>
    </ligand>
</feature>
<feature type="binding site" evidence="1">
    <location>
        <position position="270"/>
    </location>
    <ligand>
        <name>Zn(2+)</name>
        <dbReference type="ChEBI" id="CHEBI:29105"/>
    </ligand>
</feature>
<feature type="binding site" evidence="1">
    <location>
        <position position="275"/>
    </location>
    <ligand>
        <name>Zn(2+)</name>
        <dbReference type="ChEBI" id="CHEBI:29105"/>
    </ligand>
</feature>
<feature type="binding site" evidence="1">
    <location>
        <position position="277"/>
    </location>
    <ligand>
        <name>Zn(2+)</name>
        <dbReference type="ChEBI" id="CHEBI:29105"/>
    </ligand>
</feature>
<feature type="binding site" evidence="1">
    <location>
        <position position="283"/>
    </location>
    <ligand>
        <name>Zn(2+)</name>
        <dbReference type="ChEBI" id="CHEBI:29105"/>
    </ligand>
</feature>
<organism>
    <name type="scientific">Ralstonia pickettii (strain 12J)</name>
    <dbReference type="NCBI Taxonomy" id="402626"/>
    <lineage>
        <taxon>Bacteria</taxon>
        <taxon>Pseudomonadati</taxon>
        <taxon>Pseudomonadota</taxon>
        <taxon>Betaproteobacteria</taxon>
        <taxon>Burkholderiales</taxon>
        <taxon>Burkholderiaceae</taxon>
        <taxon>Ralstonia</taxon>
    </lineage>
</organism>
<accession>B2U8L7</accession>
<reference key="1">
    <citation type="submission" date="2008-05" db="EMBL/GenBank/DDBJ databases">
        <title>Complete sequence of chromosome 1 of Ralstonia pickettii 12J.</title>
        <authorList>
            <person name="Lucas S."/>
            <person name="Copeland A."/>
            <person name="Lapidus A."/>
            <person name="Glavina del Rio T."/>
            <person name="Dalin E."/>
            <person name="Tice H."/>
            <person name="Bruce D."/>
            <person name="Goodwin L."/>
            <person name="Pitluck S."/>
            <person name="Meincke L."/>
            <person name="Brettin T."/>
            <person name="Detter J.C."/>
            <person name="Han C."/>
            <person name="Kuske C.R."/>
            <person name="Schmutz J."/>
            <person name="Larimer F."/>
            <person name="Land M."/>
            <person name="Hauser L."/>
            <person name="Kyrpides N."/>
            <person name="Mikhailova N."/>
            <person name="Marsh T."/>
            <person name="Richardson P."/>
        </authorList>
    </citation>
    <scope>NUCLEOTIDE SEQUENCE [LARGE SCALE GENOMIC DNA]</scope>
    <source>
        <strain>12J</strain>
    </source>
</reference>
<name>RSGA_RALPJ</name>
<proteinExistence type="inferred from homology"/>